<sequence>MEHEFWQKKWASNVIGFHLPDTNPILTQYWSALEPKRNETVFVPLCGKSMDLDWLAERHHSVTGVELSQIAVRAFFAERLYTPTVTQLSSTLELYEFDEFTIYSGDYFVAPIEAADLIYDRAALVALPKEMREEYTQVLRSRLKEGGRILLVTLDYDQNEMAGPPFSVPEEEVRALFSGMKITRLQRDEADAEHPKIKKGLSRFAEEVWLIEN</sequence>
<reference key="1">
    <citation type="submission" date="2008-08" db="EMBL/GenBank/DDBJ databases">
        <title>Complete sequence of Vibrio fischeri strain MJ11.</title>
        <authorList>
            <person name="Mandel M.J."/>
            <person name="Stabb E.V."/>
            <person name="Ruby E.G."/>
            <person name="Ferriera S."/>
            <person name="Johnson J."/>
            <person name="Kravitz S."/>
            <person name="Beeson K."/>
            <person name="Sutton G."/>
            <person name="Rogers Y.-H."/>
            <person name="Friedman R."/>
            <person name="Frazier M."/>
            <person name="Venter J.C."/>
        </authorList>
    </citation>
    <scope>NUCLEOTIDE SEQUENCE [LARGE SCALE GENOMIC DNA]</scope>
    <source>
        <strain>MJ11</strain>
    </source>
</reference>
<gene>
    <name evidence="1" type="primary">tpm</name>
    <name type="ordered locus">VFMJ11_1605</name>
</gene>
<dbReference type="EC" id="2.1.1.67" evidence="1"/>
<dbReference type="EMBL" id="CP001139">
    <property type="protein sequence ID" value="ACH65974.1"/>
    <property type="molecule type" value="Genomic_DNA"/>
</dbReference>
<dbReference type="RefSeq" id="WP_012533406.1">
    <property type="nucleotide sequence ID" value="NC_011184.1"/>
</dbReference>
<dbReference type="SMR" id="B5FEQ9"/>
<dbReference type="KEGG" id="vfm:VFMJ11_1605"/>
<dbReference type="HOGENOM" id="CLU_085515_1_0_6"/>
<dbReference type="Proteomes" id="UP000001857">
    <property type="component" value="Chromosome I"/>
</dbReference>
<dbReference type="GO" id="GO:0005737">
    <property type="term" value="C:cytoplasm"/>
    <property type="evidence" value="ECO:0007669"/>
    <property type="project" value="UniProtKB-SubCell"/>
</dbReference>
<dbReference type="GO" id="GO:0008119">
    <property type="term" value="F:thiopurine S-methyltransferase activity"/>
    <property type="evidence" value="ECO:0007669"/>
    <property type="project" value="UniProtKB-UniRule"/>
</dbReference>
<dbReference type="GO" id="GO:0032259">
    <property type="term" value="P:methylation"/>
    <property type="evidence" value="ECO:0007669"/>
    <property type="project" value="UniProtKB-KW"/>
</dbReference>
<dbReference type="GO" id="GO:0010038">
    <property type="term" value="P:response to metal ion"/>
    <property type="evidence" value="ECO:0007669"/>
    <property type="project" value="InterPro"/>
</dbReference>
<dbReference type="FunFam" id="3.40.50.150:FF:000101">
    <property type="entry name" value="Thiopurine S-methyltransferase"/>
    <property type="match status" value="1"/>
</dbReference>
<dbReference type="Gene3D" id="3.40.50.150">
    <property type="entry name" value="Vaccinia Virus protein VP39"/>
    <property type="match status" value="1"/>
</dbReference>
<dbReference type="HAMAP" id="MF_00812">
    <property type="entry name" value="Thiopur_methtran"/>
    <property type="match status" value="1"/>
</dbReference>
<dbReference type="InterPro" id="IPR029063">
    <property type="entry name" value="SAM-dependent_MTases_sf"/>
</dbReference>
<dbReference type="InterPro" id="IPR022474">
    <property type="entry name" value="Thiopur_S-MeTfrase_Se/Te_detox"/>
</dbReference>
<dbReference type="InterPro" id="IPR025835">
    <property type="entry name" value="Thiopurine_S-MeTrfase"/>
</dbReference>
<dbReference type="InterPro" id="IPR008854">
    <property type="entry name" value="TPMT"/>
</dbReference>
<dbReference type="NCBIfam" id="NF009732">
    <property type="entry name" value="PRK13255.1"/>
    <property type="match status" value="1"/>
</dbReference>
<dbReference type="NCBIfam" id="TIGR03840">
    <property type="entry name" value="TMPT_Se_Te"/>
    <property type="match status" value="1"/>
</dbReference>
<dbReference type="PANTHER" id="PTHR10259">
    <property type="entry name" value="THIOPURINE S-METHYLTRANSFERASE"/>
    <property type="match status" value="1"/>
</dbReference>
<dbReference type="PANTHER" id="PTHR10259:SF11">
    <property type="entry name" value="THIOPURINE S-METHYLTRANSFERASE"/>
    <property type="match status" value="1"/>
</dbReference>
<dbReference type="Pfam" id="PF05724">
    <property type="entry name" value="TPMT"/>
    <property type="match status" value="1"/>
</dbReference>
<dbReference type="PIRSF" id="PIRSF023956">
    <property type="entry name" value="Thiopurine_S-methyltransferase"/>
    <property type="match status" value="1"/>
</dbReference>
<dbReference type="SUPFAM" id="SSF53335">
    <property type="entry name" value="S-adenosyl-L-methionine-dependent methyltransferases"/>
    <property type="match status" value="1"/>
</dbReference>
<dbReference type="PROSITE" id="PS51585">
    <property type="entry name" value="SAM_MT_TPMT"/>
    <property type="match status" value="1"/>
</dbReference>
<protein>
    <recommendedName>
        <fullName evidence="1">Thiopurine S-methyltransferase</fullName>
        <ecNumber evidence="1">2.1.1.67</ecNumber>
    </recommendedName>
    <alternativeName>
        <fullName evidence="1">Thiopurine methyltransferase</fullName>
    </alternativeName>
</protein>
<evidence type="ECO:0000255" key="1">
    <source>
        <dbReference type="HAMAP-Rule" id="MF_00812"/>
    </source>
</evidence>
<comment type="catalytic activity">
    <reaction evidence="1">
        <text>S-adenosyl-L-methionine + a thiopurine = S-adenosyl-L-homocysteine + a thiopurine S-methylether.</text>
        <dbReference type="EC" id="2.1.1.67"/>
    </reaction>
</comment>
<comment type="subcellular location">
    <subcellularLocation>
        <location evidence="1">Cytoplasm</location>
    </subcellularLocation>
</comment>
<comment type="similarity">
    <text evidence="1">Belongs to the class I-like SAM-binding methyltransferase superfamily. TPMT family.</text>
</comment>
<organism>
    <name type="scientific">Aliivibrio fischeri (strain MJ11)</name>
    <name type="common">Vibrio fischeri</name>
    <dbReference type="NCBI Taxonomy" id="388396"/>
    <lineage>
        <taxon>Bacteria</taxon>
        <taxon>Pseudomonadati</taxon>
        <taxon>Pseudomonadota</taxon>
        <taxon>Gammaproteobacteria</taxon>
        <taxon>Vibrionales</taxon>
        <taxon>Vibrionaceae</taxon>
        <taxon>Aliivibrio</taxon>
    </lineage>
</organism>
<name>TPMT_ALIFM</name>
<keyword id="KW-0963">Cytoplasm</keyword>
<keyword id="KW-0489">Methyltransferase</keyword>
<keyword id="KW-0949">S-adenosyl-L-methionine</keyword>
<keyword id="KW-0808">Transferase</keyword>
<proteinExistence type="inferred from homology"/>
<feature type="chain" id="PRO_1000134082" description="Thiopurine S-methyltransferase">
    <location>
        <begin position="1"/>
        <end position="213"/>
    </location>
</feature>
<feature type="binding site" evidence="1">
    <location>
        <position position="10"/>
    </location>
    <ligand>
        <name>S-adenosyl-L-methionine</name>
        <dbReference type="ChEBI" id="CHEBI:59789"/>
    </ligand>
</feature>
<feature type="binding site" evidence="1">
    <location>
        <position position="45"/>
    </location>
    <ligand>
        <name>S-adenosyl-L-methionine</name>
        <dbReference type="ChEBI" id="CHEBI:59789"/>
    </ligand>
</feature>
<feature type="binding site" evidence="1">
    <location>
        <position position="66"/>
    </location>
    <ligand>
        <name>S-adenosyl-L-methionine</name>
        <dbReference type="ChEBI" id="CHEBI:59789"/>
    </ligand>
</feature>
<feature type="binding site" evidence="1">
    <location>
        <position position="121"/>
    </location>
    <ligand>
        <name>S-adenosyl-L-methionine</name>
        <dbReference type="ChEBI" id="CHEBI:59789"/>
    </ligand>
</feature>
<accession>B5FEQ9</accession>